<feature type="chain" id="PRO_1000131486" description="Phosphatidylserine decarboxylase beta chain" evidence="1">
    <location>
        <begin position="1"/>
        <end position="189"/>
    </location>
</feature>
<feature type="chain" id="PRO_1000131487" description="Phosphatidylserine decarboxylase alpha chain" evidence="1">
    <location>
        <begin position="190"/>
        <end position="232"/>
    </location>
</feature>
<feature type="active site" description="Schiff-base intermediate with substrate; via pyruvic acid" evidence="1">
    <location>
        <position position="190"/>
    </location>
</feature>
<feature type="site" description="Cleavage (non-hydrolytic); by autocatalysis" evidence="1">
    <location>
        <begin position="189"/>
        <end position="190"/>
    </location>
</feature>
<feature type="modified residue" description="Pyruvic acid (Ser); by autocatalysis" evidence="1">
    <location>
        <position position="190"/>
    </location>
</feature>
<keyword id="KW-1003">Cell membrane</keyword>
<keyword id="KW-0210">Decarboxylase</keyword>
<keyword id="KW-0444">Lipid biosynthesis</keyword>
<keyword id="KW-0443">Lipid metabolism</keyword>
<keyword id="KW-0456">Lyase</keyword>
<keyword id="KW-0472">Membrane</keyword>
<keyword id="KW-0594">Phospholipid biosynthesis</keyword>
<keyword id="KW-1208">Phospholipid metabolism</keyword>
<keyword id="KW-0670">Pyruvate</keyword>
<keyword id="KW-0865">Zymogen</keyword>
<protein>
    <recommendedName>
        <fullName evidence="1">Phosphatidylserine decarboxylase proenzyme</fullName>
        <ecNumber evidence="1">4.1.1.65</ecNumber>
    </recommendedName>
    <component>
        <recommendedName>
            <fullName evidence="1">Phosphatidylserine decarboxylase alpha chain</fullName>
        </recommendedName>
    </component>
    <component>
        <recommendedName>
            <fullName evidence="1">Phosphatidylserine decarboxylase beta chain</fullName>
        </recommendedName>
    </component>
</protein>
<accession>B3PUR0</accession>
<dbReference type="EC" id="4.1.1.65" evidence="1"/>
<dbReference type="EMBL" id="CP001074">
    <property type="protein sequence ID" value="ACE90459.1"/>
    <property type="molecule type" value="Genomic_DNA"/>
</dbReference>
<dbReference type="KEGG" id="rec:RHECIAT_CH0001480"/>
<dbReference type="eggNOG" id="COG0688">
    <property type="taxonomic scope" value="Bacteria"/>
</dbReference>
<dbReference type="HOGENOM" id="CLU_072492_0_0_5"/>
<dbReference type="UniPathway" id="UPA00558">
    <property type="reaction ID" value="UER00616"/>
</dbReference>
<dbReference type="Proteomes" id="UP000008817">
    <property type="component" value="Chromosome"/>
</dbReference>
<dbReference type="GO" id="GO:0005886">
    <property type="term" value="C:plasma membrane"/>
    <property type="evidence" value="ECO:0007669"/>
    <property type="project" value="UniProtKB-SubCell"/>
</dbReference>
<dbReference type="GO" id="GO:0004609">
    <property type="term" value="F:phosphatidylserine decarboxylase activity"/>
    <property type="evidence" value="ECO:0007669"/>
    <property type="project" value="UniProtKB-UniRule"/>
</dbReference>
<dbReference type="GO" id="GO:0006646">
    <property type="term" value="P:phosphatidylethanolamine biosynthetic process"/>
    <property type="evidence" value="ECO:0007669"/>
    <property type="project" value="UniProtKB-UniRule"/>
</dbReference>
<dbReference type="HAMAP" id="MF_00664">
    <property type="entry name" value="PS_decarb_PSD_A"/>
    <property type="match status" value="1"/>
</dbReference>
<dbReference type="InterPro" id="IPR003817">
    <property type="entry name" value="PS_Dcarbxylase"/>
</dbReference>
<dbReference type="InterPro" id="IPR033175">
    <property type="entry name" value="PSD-A"/>
</dbReference>
<dbReference type="NCBIfam" id="NF003677">
    <property type="entry name" value="PRK05305.1-1"/>
    <property type="match status" value="1"/>
</dbReference>
<dbReference type="NCBIfam" id="NF003678">
    <property type="entry name" value="PRK05305.1-2"/>
    <property type="match status" value="1"/>
</dbReference>
<dbReference type="NCBIfam" id="NF003679">
    <property type="entry name" value="PRK05305.1-3"/>
    <property type="match status" value="1"/>
</dbReference>
<dbReference type="NCBIfam" id="NF003685">
    <property type="entry name" value="PRK05305.2-5"/>
    <property type="match status" value="1"/>
</dbReference>
<dbReference type="PANTHER" id="PTHR35809">
    <property type="entry name" value="ARCHAETIDYLSERINE DECARBOXYLASE PROENZYME-RELATED"/>
    <property type="match status" value="1"/>
</dbReference>
<dbReference type="PANTHER" id="PTHR35809:SF1">
    <property type="entry name" value="ARCHAETIDYLSERINE DECARBOXYLASE PROENZYME-RELATED"/>
    <property type="match status" value="1"/>
</dbReference>
<dbReference type="Pfam" id="PF02666">
    <property type="entry name" value="PS_Dcarbxylase"/>
    <property type="match status" value="1"/>
</dbReference>
<name>PSD_RHIE6</name>
<proteinExistence type="inferred from homology"/>
<evidence type="ECO:0000255" key="1">
    <source>
        <dbReference type="HAMAP-Rule" id="MF_00664"/>
    </source>
</evidence>
<comment type="function">
    <text evidence="1">Catalyzes the formation of phosphatidylethanolamine (PtdEtn) from phosphatidylserine (PtdSer).</text>
</comment>
<comment type="catalytic activity">
    <reaction evidence="1">
        <text>a 1,2-diacyl-sn-glycero-3-phospho-L-serine + H(+) = a 1,2-diacyl-sn-glycero-3-phosphoethanolamine + CO2</text>
        <dbReference type="Rhea" id="RHEA:20828"/>
        <dbReference type="ChEBI" id="CHEBI:15378"/>
        <dbReference type="ChEBI" id="CHEBI:16526"/>
        <dbReference type="ChEBI" id="CHEBI:57262"/>
        <dbReference type="ChEBI" id="CHEBI:64612"/>
        <dbReference type="EC" id="4.1.1.65"/>
    </reaction>
</comment>
<comment type="cofactor">
    <cofactor evidence="1">
        <name>pyruvate</name>
        <dbReference type="ChEBI" id="CHEBI:15361"/>
    </cofactor>
    <text evidence="1">Binds 1 pyruvoyl group covalently per subunit.</text>
</comment>
<comment type="pathway">
    <text evidence="1">Phospholipid metabolism; phosphatidylethanolamine biosynthesis; phosphatidylethanolamine from CDP-diacylglycerol: step 2/2.</text>
</comment>
<comment type="subunit">
    <text evidence="1">Heterodimer of a large membrane-associated beta subunit and a small pyruvoyl-containing alpha subunit.</text>
</comment>
<comment type="subcellular location">
    <subcellularLocation>
        <location evidence="1">Cell membrane</location>
        <topology evidence="1">Peripheral membrane protein</topology>
    </subcellularLocation>
</comment>
<comment type="PTM">
    <text evidence="1">Is synthesized initially as an inactive proenzyme. Formation of the active enzyme involves a self-maturation process in which the active site pyruvoyl group is generated from an internal serine residue via an autocatalytic post-translational modification. Two non-identical subunits are generated from the proenzyme in this reaction, and the pyruvate is formed at the N-terminus of the alpha chain, which is derived from the carboxyl end of the proenzyme. The post-translation cleavage follows an unusual pathway, termed non-hydrolytic serinolysis, in which the side chain hydroxyl group of the serine supplies its oxygen atom to form the C-terminus of the beta chain, while the remainder of the serine residue undergoes an oxidative deamination to produce ammonia and the pyruvoyl prosthetic group on the alpha chain.</text>
</comment>
<comment type="similarity">
    <text evidence="1">Belongs to the phosphatidylserine decarboxylase family. PSD-A subfamily.</text>
</comment>
<organism>
    <name type="scientific">Rhizobium etli (strain CIAT 652)</name>
    <dbReference type="NCBI Taxonomy" id="491916"/>
    <lineage>
        <taxon>Bacteria</taxon>
        <taxon>Pseudomonadati</taxon>
        <taxon>Pseudomonadota</taxon>
        <taxon>Alphaproteobacteria</taxon>
        <taxon>Hyphomicrobiales</taxon>
        <taxon>Rhizobiaceae</taxon>
        <taxon>Rhizobium/Agrobacterium group</taxon>
        <taxon>Rhizobium</taxon>
    </lineage>
</organism>
<gene>
    <name evidence="1" type="primary">psd</name>
    <name type="ordered locus">RHECIAT_CH0001480</name>
</gene>
<sequence length="232" mass="25575">MSLFNTVRNTIVPVHKEGYPFVAAFFVASLILGWIFKPLFWIGMIFTLWCAYFFRDPERVTPQDDDLVISPADGKVSAIQMVTPPAELDLGSEPMLRISVFMNVFNCHVNRAPMRGRIVSINYRSGSFVNAELDKASEDNERNGLVIETKHGQIGVVQIAGLVARRILCWANTNEPMDAGERFGLIRFGSRLDVFLPAGAAPRVSLGQTAIAGETVIAEFASAKGPVISRRS</sequence>
<reference key="1">
    <citation type="journal article" date="2010" name="Appl. Environ. Microbiol.">
        <title>Conserved symbiotic plasmid DNA sequences in the multireplicon pangenomic structure of Rhizobium etli.</title>
        <authorList>
            <person name="Gonzalez V."/>
            <person name="Acosta J.L."/>
            <person name="Santamaria R.I."/>
            <person name="Bustos P."/>
            <person name="Fernandez J.L."/>
            <person name="Hernandez Gonzalez I.L."/>
            <person name="Diaz R."/>
            <person name="Flores M."/>
            <person name="Palacios R."/>
            <person name="Mora J."/>
            <person name="Davila G."/>
        </authorList>
    </citation>
    <scope>NUCLEOTIDE SEQUENCE [LARGE SCALE GENOMIC DNA]</scope>
    <source>
        <strain>CIAT 652</strain>
    </source>
</reference>